<protein>
    <recommendedName>
        <fullName evidence="1">Phosphoribosylformylglycinamidine cyclo-ligase</fullName>
        <ecNumber evidence="1">6.3.3.1</ecNumber>
    </recommendedName>
    <alternativeName>
        <fullName evidence="1">AIR synthase</fullName>
    </alternativeName>
    <alternativeName>
        <fullName evidence="1">AIRS</fullName>
    </alternativeName>
    <alternativeName>
        <fullName evidence="1">Phosphoribosyl-aminoimidazole synthetase</fullName>
    </alternativeName>
</protein>
<keyword id="KW-0067">ATP-binding</keyword>
<keyword id="KW-0963">Cytoplasm</keyword>
<keyword id="KW-0436">Ligase</keyword>
<keyword id="KW-0547">Nucleotide-binding</keyword>
<keyword id="KW-0658">Purine biosynthesis</keyword>
<name>PUR5_SALDC</name>
<feature type="chain" id="PRO_1000193039" description="Phosphoribosylformylglycinamidine cyclo-ligase">
    <location>
        <begin position="1"/>
        <end position="345"/>
    </location>
</feature>
<comment type="catalytic activity">
    <reaction evidence="1">
        <text>2-formamido-N(1)-(5-O-phospho-beta-D-ribosyl)acetamidine + ATP = 5-amino-1-(5-phospho-beta-D-ribosyl)imidazole + ADP + phosphate + H(+)</text>
        <dbReference type="Rhea" id="RHEA:23032"/>
        <dbReference type="ChEBI" id="CHEBI:15378"/>
        <dbReference type="ChEBI" id="CHEBI:30616"/>
        <dbReference type="ChEBI" id="CHEBI:43474"/>
        <dbReference type="ChEBI" id="CHEBI:137981"/>
        <dbReference type="ChEBI" id="CHEBI:147287"/>
        <dbReference type="ChEBI" id="CHEBI:456216"/>
        <dbReference type="EC" id="6.3.3.1"/>
    </reaction>
</comment>
<comment type="pathway">
    <text evidence="1">Purine metabolism; IMP biosynthesis via de novo pathway; 5-amino-1-(5-phospho-D-ribosyl)imidazole from N(2)-formyl-N(1)-(5-phospho-D-ribosyl)glycinamide: step 2/2.</text>
</comment>
<comment type="subcellular location">
    <subcellularLocation>
        <location evidence="1">Cytoplasm</location>
    </subcellularLocation>
</comment>
<comment type="similarity">
    <text evidence="1">Belongs to the AIR synthase family.</text>
</comment>
<accession>B5FQJ2</accession>
<gene>
    <name evidence="1" type="primary">purM</name>
    <name type="ordered locus">SeD_A2868</name>
</gene>
<reference key="1">
    <citation type="journal article" date="2011" name="J. Bacteriol.">
        <title>Comparative genomics of 28 Salmonella enterica isolates: evidence for CRISPR-mediated adaptive sublineage evolution.</title>
        <authorList>
            <person name="Fricke W.F."/>
            <person name="Mammel M.K."/>
            <person name="McDermott P.F."/>
            <person name="Tartera C."/>
            <person name="White D.G."/>
            <person name="Leclerc J.E."/>
            <person name="Ravel J."/>
            <person name="Cebula T.A."/>
        </authorList>
    </citation>
    <scope>NUCLEOTIDE SEQUENCE [LARGE SCALE GENOMIC DNA]</scope>
    <source>
        <strain>CT_02021853</strain>
    </source>
</reference>
<proteinExistence type="inferred from homology"/>
<organism>
    <name type="scientific">Salmonella dublin (strain CT_02021853)</name>
    <dbReference type="NCBI Taxonomy" id="439851"/>
    <lineage>
        <taxon>Bacteria</taxon>
        <taxon>Pseudomonadati</taxon>
        <taxon>Pseudomonadota</taxon>
        <taxon>Gammaproteobacteria</taxon>
        <taxon>Enterobacterales</taxon>
        <taxon>Enterobacteriaceae</taxon>
        <taxon>Salmonella</taxon>
    </lineage>
</organism>
<sequence>MTDKTSLSYKDAGVDIDAGNALVDRIKGVVKKTRRPEVMGGLGGFGALCALPQKYREPVLVSGTDGVGTKLRLAMDLKRHDAIGIDLVAMCVNDLVVQGAEPLFFLDYYATGKLDVDTAASVINGIAEGCLQSGCALVGGETAEMPGMYHGEDYDVAGFCVGVVEKSEIIDGSRVAEGDVLIALGSSGPHSNGYSLVRKIIDVSGCDPQTTLLEGKPLADHLLEPTRIYVKSVLELIENVDVHAIAHLTGGGFWENIPRVLPENTQAVINESSWQWPAIFTWLQTAGNVSRHEMYRTFNCGVGMVIALSAPEADKALALLNEKGENAWKIGIIKASDSEQRVVIE</sequence>
<evidence type="ECO:0000255" key="1">
    <source>
        <dbReference type="HAMAP-Rule" id="MF_00741"/>
    </source>
</evidence>
<dbReference type="EC" id="6.3.3.1" evidence="1"/>
<dbReference type="EMBL" id="CP001144">
    <property type="protein sequence ID" value="ACH75426.1"/>
    <property type="molecule type" value="Genomic_DNA"/>
</dbReference>
<dbReference type="RefSeq" id="WP_000130477.1">
    <property type="nucleotide sequence ID" value="NC_011205.1"/>
</dbReference>
<dbReference type="SMR" id="B5FQJ2"/>
<dbReference type="KEGG" id="sed:SeD_A2868"/>
<dbReference type="HOGENOM" id="CLU_047116_0_0_6"/>
<dbReference type="UniPathway" id="UPA00074">
    <property type="reaction ID" value="UER00129"/>
</dbReference>
<dbReference type="Proteomes" id="UP000008322">
    <property type="component" value="Chromosome"/>
</dbReference>
<dbReference type="GO" id="GO:0005829">
    <property type="term" value="C:cytosol"/>
    <property type="evidence" value="ECO:0007669"/>
    <property type="project" value="TreeGrafter"/>
</dbReference>
<dbReference type="GO" id="GO:0005524">
    <property type="term" value="F:ATP binding"/>
    <property type="evidence" value="ECO:0007669"/>
    <property type="project" value="UniProtKB-KW"/>
</dbReference>
<dbReference type="GO" id="GO:0004637">
    <property type="term" value="F:phosphoribosylamine-glycine ligase activity"/>
    <property type="evidence" value="ECO:0007669"/>
    <property type="project" value="TreeGrafter"/>
</dbReference>
<dbReference type="GO" id="GO:0004641">
    <property type="term" value="F:phosphoribosylformylglycinamidine cyclo-ligase activity"/>
    <property type="evidence" value="ECO:0007669"/>
    <property type="project" value="UniProtKB-UniRule"/>
</dbReference>
<dbReference type="GO" id="GO:0006189">
    <property type="term" value="P:'de novo' IMP biosynthetic process"/>
    <property type="evidence" value="ECO:0007669"/>
    <property type="project" value="UniProtKB-UniRule"/>
</dbReference>
<dbReference type="GO" id="GO:0046084">
    <property type="term" value="P:adenine biosynthetic process"/>
    <property type="evidence" value="ECO:0007669"/>
    <property type="project" value="TreeGrafter"/>
</dbReference>
<dbReference type="CDD" id="cd02196">
    <property type="entry name" value="PurM"/>
    <property type="match status" value="1"/>
</dbReference>
<dbReference type="FunFam" id="3.30.1330.10:FF:000001">
    <property type="entry name" value="Phosphoribosylformylglycinamidine cyclo-ligase"/>
    <property type="match status" value="1"/>
</dbReference>
<dbReference type="FunFam" id="3.90.650.10:FF:000001">
    <property type="entry name" value="Phosphoribosylformylglycinamidine cyclo-ligase"/>
    <property type="match status" value="1"/>
</dbReference>
<dbReference type="Gene3D" id="3.90.650.10">
    <property type="entry name" value="PurM-like C-terminal domain"/>
    <property type="match status" value="1"/>
</dbReference>
<dbReference type="Gene3D" id="3.30.1330.10">
    <property type="entry name" value="PurM-like, N-terminal domain"/>
    <property type="match status" value="1"/>
</dbReference>
<dbReference type="HAMAP" id="MF_00741">
    <property type="entry name" value="AIRS"/>
    <property type="match status" value="1"/>
</dbReference>
<dbReference type="InterPro" id="IPR010918">
    <property type="entry name" value="PurM-like_C_dom"/>
</dbReference>
<dbReference type="InterPro" id="IPR036676">
    <property type="entry name" value="PurM-like_C_sf"/>
</dbReference>
<dbReference type="InterPro" id="IPR016188">
    <property type="entry name" value="PurM-like_N"/>
</dbReference>
<dbReference type="InterPro" id="IPR036921">
    <property type="entry name" value="PurM-like_N_sf"/>
</dbReference>
<dbReference type="InterPro" id="IPR004733">
    <property type="entry name" value="PurM_cligase"/>
</dbReference>
<dbReference type="NCBIfam" id="TIGR00878">
    <property type="entry name" value="purM"/>
    <property type="match status" value="1"/>
</dbReference>
<dbReference type="PANTHER" id="PTHR10520:SF12">
    <property type="entry name" value="TRIFUNCTIONAL PURINE BIOSYNTHETIC PROTEIN ADENOSINE-3"/>
    <property type="match status" value="1"/>
</dbReference>
<dbReference type="PANTHER" id="PTHR10520">
    <property type="entry name" value="TRIFUNCTIONAL PURINE BIOSYNTHETIC PROTEIN ADENOSINE-3-RELATED"/>
    <property type="match status" value="1"/>
</dbReference>
<dbReference type="Pfam" id="PF00586">
    <property type="entry name" value="AIRS"/>
    <property type="match status" value="1"/>
</dbReference>
<dbReference type="Pfam" id="PF02769">
    <property type="entry name" value="AIRS_C"/>
    <property type="match status" value="1"/>
</dbReference>
<dbReference type="SUPFAM" id="SSF56042">
    <property type="entry name" value="PurM C-terminal domain-like"/>
    <property type="match status" value="1"/>
</dbReference>
<dbReference type="SUPFAM" id="SSF55326">
    <property type="entry name" value="PurM N-terminal domain-like"/>
    <property type="match status" value="1"/>
</dbReference>